<feature type="chain" id="PRO_0000185543" description="Ceramide synthase">
    <location>
        <begin position="1"/>
        <end position="275"/>
    </location>
</feature>
<feature type="transmembrane region" description="Helical" evidence="1">
    <location>
        <begin position="130"/>
        <end position="150"/>
    </location>
</feature>
<feature type="transmembrane region" description="Helical" evidence="1">
    <location>
        <begin position="159"/>
        <end position="179"/>
    </location>
</feature>
<feature type="transmembrane region" description="Helical" evidence="1">
    <location>
        <begin position="194"/>
        <end position="214"/>
    </location>
</feature>
<feature type="transmembrane region" description="Helical" evidence="1">
    <location>
        <begin position="232"/>
        <end position="252"/>
    </location>
</feature>
<feature type="domain" description="TLC" evidence="2">
    <location>
        <begin position="34"/>
        <end position="261"/>
    </location>
</feature>
<feature type="splice variant" id="VSP_021637" description="In isoform 2." evidence="5">
    <location>
        <begin position="1"/>
        <end position="50"/>
    </location>
</feature>
<feature type="splice variant" id="VSP_021636" description="In isoform 3." evidence="5">
    <original>MLTPMVAGGVVFPGLFLLSKNTLQRLPQLRWEEADAVIVSAR</original>
    <variation>MALLFLLGCVFFPLCFVVLRWGLQNRTSLRMERQEAVLVASK</variation>
    <location>
        <begin position="1"/>
        <end position="42"/>
    </location>
</feature>
<dbReference type="EC" id="2.3.1.-" evidence="3"/>
<dbReference type="EMBL" id="AK005271">
    <property type="protein sequence ID" value="BAB23923.1"/>
    <property type="status" value="ALT_FRAME"/>
    <property type="molecule type" value="mRNA"/>
</dbReference>
<dbReference type="EMBL" id="AK131642">
    <property type="protein sequence ID" value="BAE20735.1"/>
    <property type="molecule type" value="mRNA"/>
</dbReference>
<dbReference type="EMBL" id="BC055444">
    <property type="protein sequence ID" value="AAH55444.1"/>
    <property type="molecule type" value="mRNA"/>
</dbReference>
<dbReference type="EMBL" id="BC093505">
    <property type="protein sequence ID" value="AAH93505.2"/>
    <property type="molecule type" value="mRNA"/>
</dbReference>
<dbReference type="CCDS" id="CCDS52400.1">
    <molecule id="Q7TNV1-3"/>
</dbReference>
<dbReference type="CCDS" id="CCDS52401.1">
    <molecule id="Q7TNV1-1"/>
</dbReference>
<dbReference type="CCDS" id="CCDS85415.1">
    <molecule id="Q7TNV1-2"/>
</dbReference>
<dbReference type="RefSeq" id="NP_001139819.1">
    <molecule id="Q7TNV1-2"/>
    <property type="nucleotide sequence ID" value="NM_001146347.1"/>
</dbReference>
<dbReference type="RefSeq" id="NP_081160.1">
    <molecule id="Q7TNV1-3"/>
    <property type="nucleotide sequence ID" value="NM_026884.1"/>
</dbReference>
<dbReference type="RefSeq" id="NP_084254.1">
    <molecule id="Q7TNV1-1"/>
    <property type="nucleotide sequence ID" value="NM_029978.1"/>
</dbReference>
<dbReference type="RefSeq" id="XP_006508227.1">
    <molecule id="Q7TNV1-3"/>
    <property type="nucleotide sequence ID" value="XM_006508164.2"/>
</dbReference>
<dbReference type="RefSeq" id="XP_006508229.1">
    <molecule id="Q7TNV1-2"/>
    <property type="nucleotide sequence ID" value="XM_006508166.3"/>
</dbReference>
<dbReference type="RefSeq" id="XP_036009300.1">
    <molecule id="Q7TNV1-3"/>
    <property type="nucleotide sequence ID" value="XM_036153407.1"/>
</dbReference>
<dbReference type="SMR" id="Q7TNV1"/>
<dbReference type="FunCoup" id="Q7TNV1">
    <property type="interactions" value="641"/>
</dbReference>
<dbReference type="STRING" id="10090.ENSMUSP00000078392"/>
<dbReference type="SwissLipids" id="SLP:000001109">
    <molecule id="Q7TNV1-1"/>
</dbReference>
<dbReference type="SwissLipids" id="SLP:000001110">
    <molecule id="Q7TNV1-3"/>
</dbReference>
<dbReference type="iPTMnet" id="Q7TNV1"/>
<dbReference type="PhosphoSitePlus" id="Q7TNV1"/>
<dbReference type="PaxDb" id="10090-ENSMUSP00000078392"/>
<dbReference type="ProteomicsDB" id="271845">
    <molecule id="Q7TNV1-1"/>
</dbReference>
<dbReference type="ProteomicsDB" id="271846">
    <molecule id="Q7TNV1-2"/>
</dbReference>
<dbReference type="ProteomicsDB" id="271847">
    <molecule id="Q7TNV1-3"/>
</dbReference>
<dbReference type="Antibodypedia" id="26964">
    <property type="antibodies" value="28 antibodies from 15 providers"/>
</dbReference>
<dbReference type="Ensembl" id="ENSMUST00000079423.7">
    <molecule id="Q7TNV1-1"/>
    <property type="protein sequence ID" value="ENSMUSP00000078392.6"/>
    <property type="gene ID" value="ENSMUSG00000058966.14"/>
</dbReference>
<dbReference type="Ensembl" id="ENSMUST00000098032.11">
    <molecule id="Q7TNV1-3"/>
    <property type="protein sequence ID" value="ENSMUSP00000095640.5"/>
    <property type="gene ID" value="ENSMUSG00000058966.14"/>
</dbReference>
<dbReference type="Ensembl" id="ENSMUST00000205324.2">
    <molecule id="Q7TNV1-3"/>
    <property type="protein sequence ID" value="ENSMUSP00000145837.2"/>
    <property type="gene ID" value="ENSMUSG00000058966.14"/>
</dbReference>
<dbReference type="Ensembl" id="ENSMUST00000207020.2">
    <molecule id="Q7TNV1-2"/>
    <property type="protein sequence ID" value="ENSMUSP00000145721.2"/>
    <property type="gene ID" value="ENSMUSG00000058966.14"/>
</dbReference>
<dbReference type="GeneID" id="68952"/>
<dbReference type="KEGG" id="mmu:68952"/>
<dbReference type="UCSC" id="uc009jsy.2">
    <molecule id="Q7TNV1-1"/>
    <property type="organism name" value="mouse"/>
</dbReference>
<dbReference type="UCSC" id="uc012ftv.1">
    <molecule id="Q7TNV1-3"/>
    <property type="organism name" value="mouse"/>
</dbReference>
<dbReference type="AGR" id="MGI:1916202"/>
<dbReference type="CTD" id="83723"/>
<dbReference type="MGI" id="MGI:1916202">
    <property type="gene designation" value="Tlcd3b"/>
</dbReference>
<dbReference type="VEuPathDB" id="HostDB:ENSMUSG00000058966"/>
<dbReference type="eggNOG" id="KOG4561">
    <property type="taxonomic scope" value="Eukaryota"/>
</dbReference>
<dbReference type="GeneTree" id="ENSGT01010000222313"/>
<dbReference type="HOGENOM" id="CLU_049796_0_0_1"/>
<dbReference type="InParanoid" id="Q7TNV1"/>
<dbReference type="OMA" id="WLRWEEA"/>
<dbReference type="PhylomeDB" id="Q7TNV1"/>
<dbReference type="TreeFam" id="TF350344"/>
<dbReference type="BioGRID-ORCS" id="68952">
    <property type="hits" value="0 hits in 78 CRISPR screens"/>
</dbReference>
<dbReference type="ChiTaRS" id="Fam57b">
    <property type="organism name" value="mouse"/>
</dbReference>
<dbReference type="PRO" id="PR:Q7TNV1"/>
<dbReference type="Proteomes" id="UP000000589">
    <property type="component" value="Chromosome 7"/>
</dbReference>
<dbReference type="RNAct" id="Q7TNV1">
    <property type="molecule type" value="protein"/>
</dbReference>
<dbReference type="Bgee" id="ENSMUSG00000058966">
    <property type="expression patterns" value="Expressed in retinal neural layer and 180 other cell types or tissues"/>
</dbReference>
<dbReference type="ExpressionAtlas" id="Q7TNV1">
    <property type="expression patterns" value="baseline and differential"/>
</dbReference>
<dbReference type="GO" id="GO:0005783">
    <property type="term" value="C:endoplasmic reticulum"/>
    <property type="evidence" value="ECO:0000314"/>
    <property type="project" value="MGI"/>
</dbReference>
<dbReference type="GO" id="GO:0005789">
    <property type="term" value="C:endoplasmic reticulum membrane"/>
    <property type="evidence" value="ECO:0007669"/>
    <property type="project" value="UniProtKB-SubCell"/>
</dbReference>
<dbReference type="GO" id="GO:0005794">
    <property type="term" value="C:Golgi apparatus"/>
    <property type="evidence" value="ECO:0000314"/>
    <property type="project" value="MGI"/>
</dbReference>
<dbReference type="GO" id="GO:0000139">
    <property type="term" value="C:Golgi membrane"/>
    <property type="evidence" value="ECO:0007669"/>
    <property type="project" value="UniProtKB-SubCell"/>
</dbReference>
<dbReference type="GO" id="GO:0050291">
    <property type="term" value="F:sphingosine N-acyltransferase activity"/>
    <property type="evidence" value="ECO:0000314"/>
    <property type="project" value="MGI"/>
</dbReference>
<dbReference type="GO" id="GO:0046513">
    <property type="term" value="P:ceramide biosynthetic process"/>
    <property type="evidence" value="ECO:0000314"/>
    <property type="project" value="MGI"/>
</dbReference>
<dbReference type="GO" id="GO:0045599">
    <property type="term" value="P:negative regulation of fat cell differentiation"/>
    <property type="evidence" value="ECO:0000315"/>
    <property type="project" value="MGI"/>
</dbReference>
<dbReference type="InterPro" id="IPR006634">
    <property type="entry name" value="TLC-dom"/>
</dbReference>
<dbReference type="InterPro" id="IPR050846">
    <property type="entry name" value="TLCD"/>
</dbReference>
<dbReference type="PANTHER" id="PTHR13439:SF15">
    <property type="entry name" value="CERAMIDE SYNTHASE"/>
    <property type="match status" value="1"/>
</dbReference>
<dbReference type="PANTHER" id="PTHR13439">
    <property type="entry name" value="CT120 PROTEIN"/>
    <property type="match status" value="1"/>
</dbReference>
<dbReference type="Pfam" id="PF03798">
    <property type="entry name" value="TRAM_LAG1_CLN8"/>
    <property type="match status" value="1"/>
</dbReference>
<dbReference type="SMART" id="SM00724">
    <property type="entry name" value="TLC"/>
    <property type="match status" value="1"/>
</dbReference>
<dbReference type="PROSITE" id="PS50922">
    <property type="entry name" value="TLC"/>
    <property type="match status" value="1"/>
</dbReference>
<name>TLC3B_MOUSE</name>
<reference key="1">
    <citation type="journal article" date="2005" name="Science">
        <title>The transcriptional landscape of the mammalian genome.</title>
        <authorList>
            <person name="Carninci P."/>
            <person name="Kasukawa T."/>
            <person name="Katayama S."/>
            <person name="Gough J."/>
            <person name="Frith M.C."/>
            <person name="Maeda N."/>
            <person name="Oyama R."/>
            <person name="Ravasi T."/>
            <person name="Lenhard B."/>
            <person name="Wells C."/>
            <person name="Kodzius R."/>
            <person name="Shimokawa K."/>
            <person name="Bajic V.B."/>
            <person name="Brenner S.E."/>
            <person name="Batalov S."/>
            <person name="Forrest A.R."/>
            <person name="Zavolan M."/>
            <person name="Davis M.J."/>
            <person name="Wilming L.G."/>
            <person name="Aidinis V."/>
            <person name="Allen J.E."/>
            <person name="Ambesi-Impiombato A."/>
            <person name="Apweiler R."/>
            <person name="Aturaliya R.N."/>
            <person name="Bailey T.L."/>
            <person name="Bansal M."/>
            <person name="Baxter L."/>
            <person name="Beisel K.W."/>
            <person name="Bersano T."/>
            <person name="Bono H."/>
            <person name="Chalk A.M."/>
            <person name="Chiu K.P."/>
            <person name="Choudhary V."/>
            <person name="Christoffels A."/>
            <person name="Clutterbuck D.R."/>
            <person name="Crowe M.L."/>
            <person name="Dalla E."/>
            <person name="Dalrymple B.P."/>
            <person name="de Bono B."/>
            <person name="Della Gatta G."/>
            <person name="di Bernardo D."/>
            <person name="Down T."/>
            <person name="Engstrom P."/>
            <person name="Fagiolini M."/>
            <person name="Faulkner G."/>
            <person name="Fletcher C.F."/>
            <person name="Fukushima T."/>
            <person name="Furuno M."/>
            <person name="Futaki S."/>
            <person name="Gariboldi M."/>
            <person name="Georgii-Hemming P."/>
            <person name="Gingeras T.R."/>
            <person name="Gojobori T."/>
            <person name="Green R.E."/>
            <person name="Gustincich S."/>
            <person name="Harbers M."/>
            <person name="Hayashi Y."/>
            <person name="Hensch T.K."/>
            <person name="Hirokawa N."/>
            <person name="Hill D."/>
            <person name="Huminiecki L."/>
            <person name="Iacono M."/>
            <person name="Ikeo K."/>
            <person name="Iwama A."/>
            <person name="Ishikawa T."/>
            <person name="Jakt M."/>
            <person name="Kanapin A."/>
            <person name="Katoh M."/>
            <person name="Kawasawa Y."/>
            <person name="Kelso J."/>
            <person name="Kitamura H."/>
            <person name="Kitano H."/>
            <person name="Kollias G."/>
            <person name="Krishnan S.P."/>
            <person name="Kruger A."/>
            <person name="Kummerfeld S.K."/>
            <person name="Kurochkin I.V."/>
            <person name="Lareau L.F."/>
            <person name="Lazarevic D."/>
            <person name="Lipovich L."/>
            <person name="Liu J."/>
            <person name="Liuni S."/>
            <person name="McWilliam S."/>
            <person name="Madan Babu M."/>
            <person name="Madera M."/>
            <person name="Marchionni L."/>
            <person name="Matsuda H."/>
            <person name="Matsuzawa S."/>
            <person name="Miki H."/>
            <person name="Mignone F."/>
            <person name="Miyake S."/>
            <person name="Morris K."/>
            <person name="Mottagui-Tabar S."/>
            <person name="Mulder N."/>
            <person name="Nakano N."/>
            <person name="Nakauchi H."/>
            <person name="Ng P."/>
            <person name="Nilsson R."/>
            <person name="Nishiguchi S."/>
            <person name="Nishikawa S."/>
            <person name="Nori F."/>
            <person name="Ohara O."/>
            <person name="Okazaki Y."/>
            <person name="Orlando V."/>
            <person name="Pang K.C."/>
            <person name="Pavan W.J."/>
            <person name="Pavesi G."/>
            <person name="Pesole G."/>
            <person name="Petrovsky N."/>
            <person name="Piazza S."/>
            <person name="Reed J."/>
            <person name="Reid J.F."/>
            <person name="Ring B.Z."/>
            <person name="Ringwald M."/>
            <person name="Rost B."/>
            <person name="Ruan Y."/>
            <person name="Salzberg S.L."/>
            <person name="Sandelin A."/>
            <person name="Schneider C."/>
            <person name="Schoenbach C."/>
            <person name="Sekiguchi K."/>
            <person name="Semple C.A."/>
            <person name="Seno S."/>
            <person name="Sessa L."/>
            <person name="Sheng Y."/>
            <person name="Shibata Y."/>
            <person name="Shimada H."/>
            <person name="Shimada K."/>
            <person name="Silva D."/>
            <person name="Sinclair B."/>
            <person name="Sperling S."/>
            <person name="Stupka E."/>
            <person name="Sugiura K."/>
            <person name="Sultana R."/>
            <person name="Takenaka Y."/>
            <person name="Taki K."/>
            <person name="Tammoja K."/>
            <person name="Tan S.L."/>
            <person name="Tang S."/>
            <person name="Taylor M.S."/>
            <person name="Tegner J."/>
            <person name="Teichmann S.A."/>
            <person name="Ueda H.R."/>
            <person name="van Nimwegen E."/>
            <person name="Verardo R."/>
            <person name="Wei C.L."/>
            <person name="Yagi K."/>
            <person name="Yamanishi H."/>
            <person name="Zabarovsky E."/>
            <person name="Zhu S."/>
            <person name="Zimmer A."/>
            <person name="Hide W."/>
            <person name="Bult C."/>
            <person name="Grimmond S.M."/>
            <person name="Teasdale R.D."/>
            <person name="Liu E.T."/>
            <person name="Brusic V."/>
            <person name="Quackenbush J."/>
            <person name="Wahlestedt C."/>
            <person name="Mattick J.S."/>
            <person name="Hume D.A."/>
            <person name="Kai C."/>
            <person name="Sasaki D."/>
            <person name="Tomaru Y."/>
            <person name="Fukuda S."/>
            <person name="Kanamori-Katayama M."/>
            <person name="Suzuki M."/>
            <person name="Aoki J."/>
            <person name="Arakawa T."/>
            <person name="Iida J."/>
            <person name="Imamura K."/>
            <person name="Itoh M."/>
            <person name="Kato T."/>
            <person name="Kawaji H."/>
            <person name="Kawagashira N."/>
            <person name="Kawashima T."/>
            <person name="Kojima M."/>
            <person name="Kondo S."/>
            <person name="Konno H."/>
            <person name="Nakano K."/>
            <person name="Ninomiya N."/>
            <person name="Nishio T."/>
            <person name="Okada M."/>
            <person name="Plessy C."/>
            <person name="Shibata K."/>
            <person name="Shiraki T."/>
            <person name="Suzuki S."/>
            <person name="Tagami M."/>
            <person name="Waki K."/>
            <person name="Watahiki A."/>
            <person name="Okamura-Oho Y."/>
            <person name="Suzuki H."/>
            <person name="Kawai J."/>
            <person name="Hayashizaki Y."/>
        </authorList>
    </citation>
    <scope>NUCLEOTIDE SEQUENCE [LARGE SCALE MRNA] (ISOFORM 1)</scope>
    <source>
        <strain>C57BL/6J</strain>
        <tissue>Cerebellum</tissue>
    </source>
</reference>
<reference key="2">
    <citation type="journal article" date="2004" name="Genome Res.">
        <title>The status, quality, and expansion of the NIH full-length cDNA project: the Mammalian Gene Collection (MGC).</title>
        <authorList>
            <consortium name="The MGC Project Team"/>
        </authorList>
    </citation>
    <scope>NUCLEOTIDE SEQUENCE [LARGE SCALE MRNA] (ISOFORMS 2 AND 3)</scope>
    <source>
        <strain>C57BL/6J</strain>
        <tissue>Retina</tissue>
    </source>
</reference>
<reference key="3">
    <citation type="journal article" date="2013" name="J. Biol. Chem.">
        <title>Fam57b (family with sequence similarity 57, member B), a novel peroxisome proliferator-activated receptor gamma target gene that regulates adipogenesis through ceramide synthesis.</title>
        <authorList>
            <person name="Yamashita-Sugahara Y."/>
            <person name="Tokuzawa Y."/>
            <person name="Nakachi Y."/>
            <person name="Kanesaki-Yatsuka Y."/>
            <person name="Matsumoto M."/>
            <person name="Mizuno Y."/>
            <person name="Okazaki Y."/>
        </authorList>
    </citation>
    <scope>FUNCTION</scope>
    <scope>ALTERNATIVE PROMOTER USAGE</scope>
    <scope>SUBCELLULAR LOCATION</scope>
    <scope>TISSUE SPECIFICITY</scope>
    <scope>DEVELOPMENTAL STAGE</scope>
    <scope>CATALYTIC ACTIVITY</scope>
</reference>
<reference key="4">
    <citation type="journal article" date="2021" name="Genet. Med.">
        <title>Ceramide synthase TLCD3B is a novel gene associated with human recessive retinal dystrophy.</title>
        <authorList>
            <person name="Bertrand R.E."/>
            <person name="Wang J."/>
            <person name="Xiong K.H."/>
            <person name="Thangavel C."/>
            <person name="Qian X."/>
            <person name="Ba-Abbad R."/>
            <person name="Liang Q."/>
            <person name="Simoes R.T."/>
            <person name="Sampaio S.A.M."/>
            <person name="Carss K.J."/>
            <person name="Lucy Raymond F."/>
            <person name="Robson A.G."/>
            <person name="Webster A.R."/>
            <person name="Arno G."/>
            <person name="Porto F.B.O."/>
            <person name="Chen R."/>
        </authorList>
    </citation>
    <scope>DISRUPTION PHENOTYPE</scope>
</reference>
<protein>
    <recommendedName>
        <fullName evidence="7">Ceramide synthase</fullName>
        <ecNumber evidence="3">2.3.1.-</ecNumber>
    </recommendedName>
    <alternativeName>
        <fullName>Protein FAM57B</fullName>
    </alternativeName>
    <alternativeName>
        <fullName>TLC domain-containing protein 3B</fullName>
    </alternativeName>
</protein>
<keyword id="KW-0877">Alternative promoter usage</keyword>
<keyword id="KW-0256">Endoplasmic reticulum</keyword>
<keyword id="KW-0333">Golgi apparatus</keyword>
<keyword id="KW-0444">Lipid biosynthesis</keyword>
<keyword id="KW-0443">Lipid metabolism</keyword>
<keyword id="KW-0472">Membrane</keyword>
<keyword id="KW-1185">Reference proteome</keyword>
<keyword id="KW-0808">Transferase</keyword>
<keyword id="KW-0812">Transmembrane</keyword>
<keyword id="KW-1133">Transmembrane helix</keyword>
<sequence length="275" mass="30778">MLTPMVAGGVVFPGLFLLSKNTLQRLPQLRWEEADAVIVSARLVSSVQAIMASTAGYIVSTSCKHIIDDQHWLSSAYTQFAVPYFIYDIYAMFLCHWHKHQVKGHGGEDGTPRALGSTWAVVRGYLHKEFLMVLHHAAMVLVCFPLSVVWRQGKGDFFLGCMLMAEVSTPFVCLGKILIQYKQQHTLLHKVNGALMLLSFLCCRVLLFPYLYWAYGRHAGLPLLSVPMAIPAHVNLGAALLLAPQLYWFFLICRGACRLFRPRGSPPPSPCQTQD</sequence>
<proteinExistence type="evidence at protein level"/>
<evidence type="ECO:0000255" key="1"/>
<evidence type="ECO:0000255" key="2">
    <source>
        <dbReference type="PROSITE-ProRule" id="PRU00205"/>
    </source>
</evidence>
<evidence type="ECO:0000269" key="3">
    <source>
    </source>
</evidence>
<evidence type="ECO:0000269" key="4">
    <source>
    </source>
</evidence>
<evidence type="ECO:0000303" key="5">
    <source>
    </source>
</evidence>
<evidence type="ECO:0000305" key="6"/>
<evidence type="ECO:0000305" key="7">
    <source>
    </source>
</evidence>
<gene>
    <name type="primary">Tlcd3b</name>
    <name type="synonym">Fam57b</name>
</gene>
<comment type="function">
    <text evidence="3">Involved in ceramide synthesis. In vitro, isoform 3 stimulates the production of C16-, C18- and C20-ceramides, isoform 1 slightly increases the levels of C18- and C20-ceramides, while isoform 2 exhibits only minimal activity. May interfere with adipogenesis by stimulating ceramide synthesis.</text>
</comment>
<comment type="catalytic activity">
    <reaction evidence="3">
        <text>sphing-4-enine + octadecanoyl-CoA = N-octadecanoylsphing-4-enine + CoA + H(+)</text>
        <dbReference type="Rhea" id="RHEA:36691"/>
        <dbReference type="ChEBI" id="CHEBI:15378"/>
        <dbReference type="ChEBI" id="CHEBI:57287"/>
        <dbReference type="ChEBI" id="CHEBI:57394"/>
        <dbReference type="ChEBI" id="CHEBI:57756"/>
        <dbReference type="ChEBI" id="CHEBI:72961"/>
    </reaction>
</comment>
<comment type="catalytic activity">
    <reaction evidence="3">
        <text>eicosanoyl-CoA + sphing-4-enine = N-eicosanoyl-sphing-4-enine + CoA + H(+)</text>
        <dbReference type="Rhea" id="RHEA:45284"/>
        <dbReference type="ChEBI" id="CHEBI:15378"/>
        <dbReference type="ChEBI" id="CHEBI:57287"/>
        <dbReference type="ChEBI" id="CHEBI:57380"/>
        <dbReference type="ChEBI" id="CHEBI:57756"/>
        <dbReference type="ChEBI" id="CHEBI:72962"/>
    </reaction>
</comment>
<comment type="catalytic activity">
    <reaction evidence="3">
        <text>sphing-4-enine + hexadecanoyl-CoA = N-hexadecanoylsphing-4-enine + CoA + H(+)</text>
        <dbReference type="Rhea" id="RHEA:36687"/>
        <dbReference type="ChEBI" id="CHEBI:15378"/>
        <dbReference type="ChEBI" id="CHEBI:57287"/>
        <dbReference type="ChEBI" id="CHEBI:57379"/>
        <dbReference type="ChEBI" id="CHEBI:57756"/>
        <dbReference type="ChEBI" id="CHEBI:72959"/>
    </reaction>
</comment>
<comment type="subcellular location">
    <molecule>Isoform 1</molecule>
    <subcellularLocation>
        <location evidence="3">Golgi apparatus membrane</location>
        <topology evidence="1">Multi-pass membrane protein</topology>
    </subcellularLocation>
</comment>
<comment type="subcellular location">
    <molecule>Isoform 2</molecule>
    <subcellularLocation>
        <location evidence="3">Endoplasmic reticulum membrane</location>
        <topology evidence="1">Multi-pass membrane protein</topology>
    </subcellularLocation>
</comment>
<comment type="subcellular location">
    <molecule>Isoform 3</molecule>
    <subcellularLocation>
        <location evidence="3">Endoplasmic reticulum membrane</location>
        <topology evidence="1">Multi-pass membrane protein</topology>
    </subcellularLocation>
</comment>
<comment type="alternative products">
    <event type="alternative promoter"/>
    <isoform>
        <id>Q7TNV1-1</id>
        <name>1</name>
        <sequence type="displayed"/>
    </isoform>
    <isoform>
        <id>Q7TNV1-2</id>
        <name>2</name>
        <sequence type="described" ref="VSP_021637"/>
    </isoform>
    <isoform>
        <id>Q7TNV1-3</id>
        <name>3</name>
        <sequence type="described" ref="VSP_021636"/>
    </isoform>
</comment>
<comment type="tissue specificity">
    <text evidence="3">Each isoform has a distinct expression pattern. Isoform 1 is highly expressed in brain. Isoform 2 is expressed at low levels, if any, in all analyzed tissues, with slightly higher levels in testis. Isoform 3 is expressed at very high levels in testis and, at lower levels, in white adipose tissue. In epididymal fat, isoform 3 is expressed at higher levels in obese mice compared with lean mice. By contrast, isoform 1 and 2 levels are significantly lower in obese mice compared with lean mice.</text>
</comment>
<comment type="developmental stage">
    <text evidence="3">Up-regulated during adipogenesis.</text>
</comment>
<comment type="induction">
    <molecule>Isoform 3</molecule>
    <text>Strongly up-regulated by PPARG.</text>
</comment>
<comment type="disruption phenotype">
    <text evidence="4">Knockout mice exhibit a significant reduction of the cone photoreceptor light responses, thinning of the outer nuclear layer, and loss of cone photoreceptors across the retina compared with wild-type animals (PubMed:33077892). Knockout male mice are fertile (PubMed:33077892).</text>
</comment>
<comment type="sequence caution" evidence="6">
    <conflict type="frameshift">
        <sequence resource="EMBL-CDS" id="BAB23923"/>
    </conflict>
</comment>
<organism>
    <name type="scientific">Mus musculus</name>
    <name type="common">Mouse</name>
    <dbReference type="NCBI Taxonomy" id="10090"/>
    <lineage>
        <taxon>Eukaryota</taxon>
        <taxon>Metazoa</taxon>
        <taxon>Chordata</taxon>
        <taxon>Craniata</taxon>
        <taxon>Vertebrata</taxon>
        <taxon>Euteleostomi</taxon>
        <taxon>Mammalia</taxon>
        <taxon>Eutheria</taxon>
        <taxon>Euarchontoglires</taxon>
        <taxon>Glires</taxon>
        <taxon>Rodentia</taxon>
        <taxon>Myomorpha</taxon>
        <taxon>Muroidea</taxon>
        <taxon>Muridae</taxon>
        <taxon>Murinae</taxon>
        <taxon>Mus</taxon>
        <taxon>Mus</taxon>
    </lineage>
</organism>
<accession>Q7TNV1</accession>
<accession>Q3V2R2</accession>
<accession>Q561N3</accession>
<accession>Q9CW26</accession>